<dbReference type="EMBL" id="AE000782">
    <property type="protein sequence ID" value="AAB90703.1"/>
    <property type="molecule type" value="Genomic_DNA"/>
</dbReference>
<dbReference type="PIR" id="H69316">
    <property type="entry name" value="H69316"/>
</dbReference>
<dbReference type="SMR" id="O29714"/>
<dbReference type="STRING" id="224325.AF_0536"/>
<dbReference type="PaxDb" id="224325-AF_0536"/>
<dbReference type="EnsemblBacteria" id="AAB90703">
    <property type="protein sequence ID" value="AAB90703"/>
    <property type="gene ID" value="AF_0536"/>
</dbReference>
<dbReference type="KEGG" id="afu:AF_0536"/>
<dbReference type="eggNOG" id="arCOG02204">
    <property type="taxonomic scope" value="Archaea"/>
</dbReference>
<dbReference type="HOGENOM" id="CLU_191921_2_0_2"/>
<dbReference type="OrthoDB" id="52835at2157"/>
<dbReference type="Proteomes" id="UP000002199">
    <property type="component" value="Chromosome"/>
</dbReference>
<dbReference type="GO" id="GO:0005886">
    <property type="term" value="C:plasma membrane"/>
    <property type="evidence" value="ECO:0007669"/>
    <property type="project" value="UniProtKB-SubCell"/>
</dbReference>
<dbReference type="GO" id="GO:0008320">
    <property type="term" value="F:protein transmembrane transporter activity"/>
    <property type="evidence" value="ECO:0007669"/>
    <property type="project" value="UniProtKB-UniRule"/>
</dbReference>
<dbReference type="GO" id="GO:0065002">
    <property type="term" value="P:intracellular protein transmembrane transport"/>
    <property type="evidence" value="ECO:0007669"/>
    <property type="project" value="UniProtKB-UniRule"/>
</dbReference>
<dbReference type="GO" id="GO:0009306">
    <property type="term" value="P:protein secretion"/>
    <property type="evidence" value="ECO:0007669"/>
    <property type="project" value="UniProtKB-UniRule"/>
</dbReference>
<dbReference type="GO" id="GO:0006605">
    <property type="term" value="P:protein targeting"/>
    <property type="evidence" value="ECO:0007669"/>
    <property type="project" value="UniProtKB-UniRule"/>
</dbReference>
<dbReference type="Gene3D" id="1.20.5.820">
    <property type="entry name" value="Preprotein translocase SecE subunit"/>
    <property type="match status" value="1"/>
</dbReference>
<dbReference type="HAMAP" id="MF_00422">
    <property type="entry name" value="SecE"/>
    <property type="match status" value="1"/>
</dbReference>
<dbReference type="InterPro" id="IPR023391">
    <property type="entry name" value="Prot_translocase_SecE_dom_sf"/>
</dbReference>
<dbReference type="InterPro" id="IPR008158">
    <property type="entry name" value="Translocase_Sec61-g"/>
</dbReference>
<dbReference type="InterPro" id="IPR001901">
    <property type="entry name" value="Translocase_SecE/Sec61-g"/>
</dbReference>
<dbReference type="NCBIfam" id="TIGR00327">
    <property type="entry name" value="secE_euk_arch"/>
    <property type="match status" value="1"/>
</dbReference>
<dbReference type="Pfam" id="PF00584">
    <property type="entry name" value="SecE"/>
    <property type="match status" value="1"/>
</dbReference>
<dbReference type="SUPFAM" id="SSF103456">
    <property type="entry name" value="Preprotein translocase SecE subunit"/>
    <property type="match status" value="1"/>
</dbReference>
<sequence length="66" mass="7547">MDISGMQINEVQSKLKEYYNVLKMARKPDWEEFSMTAKVALAVMFIVGFVGFVIYILMEILPGALK</sequence>
<protein>
    <recommendedName>
        <fullName evidence="1">Protein translocase subunit SecE</fullName>
    </recommendedName>
    <alternativeName>
        <fullName evidence="1">Protein transport protein Sec61 gamma subunit homolog</fullName>
    </alternativeName>
</protein>
<name>SECE_ARCFU</name>
<evidence type="ECO:0000255" key="1">
    <source>
        <dbReference type="HAMAP-Rule" id="MF_00422"/>
    </source>
</evidence>
<gene>
    <name evidence="1" type="primary">secE</name>
    <name type="ordered locus">AF_0536</name>
</gene>
<feature type="chain" id="PRO_0000104214" description="Protein translocase subunit SecE">
    <location>
        <begin position="1"/>
        <end position="66"/>
    </location>
</feature>
<feature type="transmembrane region" description="Helical" evidence="1">
    <location>
        <begin position="41"/>
        <end position="61"/>
    </location>
</feature>
<reference key="1">
    <citation type="journal article" date="1997" name="Nature">
        <title>The complete genome sequence of the hyperthermophilic, sulphate-reducing archaeon Archaeoglobus fulgidus.</title>
        <authorList>
            <person name="Klenk H.-P."/>
            <person name="Clayton R.A."/>
            <person name="Tomb J.-F."/>
            <person name="White O."/>
            <person name="Nelson K.E."/>
            <person name="Ketchum K.A."/>
            <person name="Dodson R.J."/>
            <person name="Gwinn M.L."/>
            <person name="Hickey E.K."/>
            <person name="Peterson J.D."/>
            <person name="Richardson D.L."/>
            <person name="Kerlavage A.R."/>
            <person name="Graham D.E."/>
            <person name="Kyrpides N.C."/>
            <person name="Fleischmann R.D."/>
            <person name="Quackenbush J."/>
            <person name="Lee N.H."/>
            <person name="Sutton G.G."/>
            <person name="Gill S.R."/>
            <person name="Kirkness E.F."/>
            <person name="Dougherty B.A."/>
            <person name="McKenney K."/>
            <person name="Adams M.D."/>
            <person name="Loftus B.J."/>
            <person name="Peterson S.N."/>
            <person name="Reich C.I."/>
            <person name="McNeil L.K."/>
            <person name="Badger J.H."/>
            <person name="Glodek A."/>
            <person name="Zhou L."/>
            <person name="Overbeek R."/>
            <person name="Gocayne J.D."/>
            <person name="Weidman J.F."/>
            <person name="McDonald L.A."/>
            <person name="Utterback T.R."/>
            <person name="Cotton M.D."/>
            <person name="Spriggs T."/>
            <person name="Artiach P."/>
            <person name="Kaine B.P."/>
            <person name="Sykes S.M."/>
            <person name="Sadow P.W."/>
            <person name="D'Andrea K.P."/>
            <person name="Bowman C."/>
            <person name="Fujii C."/>
            <person name="Garland S.A."/>
            <person name="Mason T.M."/>
            <person name="Olsen G.J."/>
            <person name="Fraser C.M."/>
            <person name="Smith H.O."/>
            <person name="Woese C.R."/>
            <person name="Venter J.C."/>
        </authorList>
    </citation>
    <scope>NUCLEOTIDE SEQUENCE [LARGE SCALE GENOMIC DNA]</scope>
    <source>
        <strain>ATCC 49558 / DSM 4304 / JCM 9628 / NBRC 100126 / VC-16</strain>
    </source>
</reference>
<organism>
    <name type="scientific">Archaeoglobus fulgidus (strain ATCC 49558 / DSM 4304 / JCM 9628 / NBRC 100126 / VC-16)</name>
    <dbReference type="NCBI Taxonomy" id="224325"/>
    <lineage>
        <taxon>Archaea</taxon>
        <taxon>Methanobacteriati</taxon>
        <taxon>Methanobacteriota</taxon>
        <taxon>Archaeoglobi</taxon>
        <taxon>Archaeoglobales</taxon>
        <taxon>Archaeoglobaceae</taxon>
        <taxon>Archaeoglobus</taxon>
    </lineage>
</organism>
<accession>O29714</accession>
<proteinExistence type="inferred from homology"/>
<keyword id="KW-1003">Cell membrane</keyword>
<keyword id="KW-0472">Membrane</keyword>
<keyword id="KW-0653">Protein transport</keyword>
<keyword id="KW-1185">Reference proteome</keyword>
<keyword id="KW-0811">Translocation</keyword>
<keyword id="KW-0812">Transmembrane</keyword>
<keyword id="KW-1133">Transmembrane helix</keyword>
<keyword id="KW-0813">Transport</keyword>
<comment type="function">
    <text evidence="1">Essential subunit of the Sec protein translocation channel SecYEG. Clamps together the 2 halves of SecY. May contact the channel plug during translocation.</text>
</comment>
<comment type="subunit">
    <text evidence="1">Component of the Sec protein translocase complex. Heterotrimer consisting of SecY (alpha), SecG (beta) and SecE (gamma) subunits. The heterotrimers can form oligomers, although 1 heterotrimer is thought to be able to translocate proteins. Interacts with the ribosome. May interact with SecDF, and other proteins may be involved.</text>
</comment>
<comment type="subcellular location">
    <subcellularLocation>
        <location evidence="1">Cell membrane</location>
        <topology evidence="1">Single-pass membrane protein</topology>
    </subcellularLocation>
</comment>
<comment type="similarity">
    <text evidence="1">Belongs to the SecE/SEC61-gamma family.</text>
</comment>